<proteinExistence type="inferred from homology"/>
<keyword id="KW-0342">GTP-binding</keyword>
<keyword id="KW-0378">Hydrolase</keyword>
<keyword id="KW-0479">Metal-binding</keyword>
<keyword id="KW-0547">Nucleotide-binding</keyword>
<keyword id="KW-0686">Riboflavin biosynthesis</keyword>
<keyword id="KW-0862">Zinc</keyword>
<gene>
    <name evidence="1" type="primary">ribA</name>
    <name type="ordered locus">NMCC_1137</name>
</gene>
<feature type="chain" id="PRO_1000077258" description="GTP cyclohydrolase-2">
    <location>
        <begin position="1"/>
        <end position="197"/>
    </location>
</feature>
<feature type="active site" description="Proton acceptor" evidence="1">
    <location>
        <position position="127"/>
    </location>
</feature>
<feature type="active site" description="Nucleophile" evidence="1">
    <location>
        <position position="129"/>
    </location>
</feature>
<feature type="binding site" evidence="1">
    <location>
        <begin position="50"/>
        <end position="54"/>
    </location>
    <ligand>
        <name>GTP</name>
        <dbReference type="ChEBI" id="CHEBI:37565"/>
    </ligand>
</feature>
<feature type="binding site" evidence="1">
    <location>
        <position position="55"/>
    </location>
    <ligand>
        <name>Zn(2+)</name>
        <dbReference type="ChEBI" id="CHEBI:29105"/>
        <note>catalytic</note>
    </ligand>
</feature>
<feature type="binding site" evidence="1">
    <location>
        <position position="66"/>
    </location>
    <ligand>
        <name>Zn(2+)</name>
        <dbReference type="ChEBI" id="CHEBI:29105"/>
        <note>catalytic</note>
    </ligand>
</feature>
<feature type="binding site" evidence="1">
    <location>
        <position position="68"/>
    </location>
    <ligand>
        <name>Zn(2+)</name>
        <dbReference type="ChEBI" id="CHEBI:29105"/>
        <note>catalytic</note>
    </ligand>
</feature>
<feature type="binding site" evidence="1">
    <location>
        <position position="71"/>
    </location>
    <ligand>
        <name>GTP</name>
        <dbReference type="ChEBI" id="CHEBI:37565"/>
    </ligand>
</feature>
<feature type="binding site" evidence="1">
    <location>
        <begin position="93"/>
        <end position="95"/>
    </location>
    <ligand>
        <name>GTP</name>
        <dbReference type="ChEBI" id="CHEBI:37565"/>
    </ligand>
</feature>
<feature type="binding site" evidence="1">
    <location>
        <position position="115"/>
    </location>
    <ligand>
        <name>GTP</name>
        <dbReference type="ChEBI" id="CHEBI:37565"/>
    </ligand>
</feature>
<feature type="binding site" evidence="1">
    <location>
        <position position="150"/>
    </location>
    <ligand>
        <name>GTP</name>
        <dbReference type="ChEBI" id="CHEBI:37565"/>
    </ligand>
</feature>
<feature type="binding site" evidence="1">
    <location>
        <position position="155"/>
    </location>
    <ligand>
        <name>GTP</name>
        <dbReference type="ChEBI" id="CHEBI:37565"/>
    </ligand>
</feature>
<evidence type="ECO:0000255" key="1">
    <source>
        <dbReference type="HAMAP-Rule" id="MF_00179"/>
    </source>
</evidence>
<accession>A9LZD5</accession>
<comment type="function">
    <text evidence="1">Catalyzes the conversion of GTP to 2,5-diamino-6-ribosylamino-4(3H)-pyrimidinone 5'-phosphate (DARP), formate and pyrophosphate.</text>
</comment>
<comment type="catalytic activity">
    <reaction evidence="1">
        <text>GTP + 4 H2O = 2,5-diamino-6-hydroxy-4-(5-phosphoribosylamino)-pyrimidine + formate + 2 phosphate + 3 H(+)</text>
        <dbReference type="Rhea" id="RHEA:23704"/>
        <dbReference type="ChEBI" id="CHEBI:15377"/>
        <dbReference type="ChEBI" id="CHEBI:15378"/>
        <dbReference type="ChEBI" id="CHEBI:15740"/>
        <dbReference type="ChEBI" id="CHEBI:37565"/>
        <dbReference type="ChEBI" id="CHEBI:43474"/>
        <dbReference type="ChEBI" id="CHEBI:58614"/>
        <dbReference type="EC" id="3.5.4.25"/>
    </reaction>
</comment>
<comment type="cofactor">
    <cofactor evidence="1">
        <name>Zn(2+)</name>
        <dbReference type="ChEBI" id="CHEBI:29105"/>
    </cofactor>
    <text evidence="1">Binds 1 zinc ion per subunit.</text>
</comment>
<comment type="pathway">
    <text evidence="1">Cofactor biosynthesis; riboflavin biosynthesis; 5-amino-6-(D-ribitylamino)uracil from GTP: step 1/4.</text>
</comment>
<comment type="similarity">
    <text evidence="1">Belongs to the GTP cyclohydrolase II family.</text>
</comment>
<sequence length="197" mass="21930">MSEMLNHVASCRLPTEWGVFTMHGFEEANGQEHVALTVGNFSDGNPVLTRIHSECLTGDALFSRKCDCGPQLEAAMRAVQTEGRGIIVYLRQEGRGIGLINKIRAYHLQDQGMDTVEANLALGLPVDARDFRLAQSIYEYLGIRSVKLLTNNPEKIQTLKDAGINVVERIPLHVGENLENKRYLQTKADKLGHLMSE</sequence>
<name>RIBA_NEIM0</name>
<protein>
    <recommendedName>
        <fullName evidence="1">GTP cyclohydrolase-2</fullName>
        <ecNumber evidence="1">3.5.4.25</ecNumber>
    </recommendedName>
    <alternativeName>
        <fullName evidence="1">GTP cyclohydrolase II</fullName>
    </alternativeName>
</protein>
<organism>
    <name type="scientific">Neisseria meningitidis serogroup C (strain 053442)</name>
    <dbReference type="NCBI Taxonomy" id="374833"/>
    <lineage>
        <taxon>Bacteria</taxon>
        <taxon>Pseudomonadati</taxon>
        <taxon>Pseudomonadota</taxon>
        <taxon>Betaproteobacteria</taxon>
        <taxon>Neisseriales</taxon>
        <taxon>Neisseriaceae</taxon>
        <taxon>Neisseria</taxon>
    </lineage>
</organism>
<dbReference type="EC" id="3.5.4.25" evidence="1"/>
<dbReference type="EMBL" id="CP000381">
    <property type="protein sequence ID" value="ABX73311.1"/>
    <property type="molecule type" value="Genomic_DNA"/>
</dbReference>
<dbReference type="RefSeq" id="WP_002220947.1">
    <property type="nucleotide sequence ID" value="NC_010120.1"/>
</dbReference>
<dbReference type="SMR" id="A9LZD5"/>
<dbReference type="GeneID" id="93385976"/>
<dbReference type="KEGG" id="nmn:NMCC_1137"/>
<dbReference type="HOGENOM" id="CLU_020273_2_1_4"/>
<dbReference type="UniPathway" id="UPA00275">
    <property type="reaction ID" value="UER00400"/>
</dbReference>
<dbReference type="Proteomes" id="UP000001177">
    <property type="component" value="Chromosome"/>
</dbReference>
<dbReference type="GO" id="GO:0005829">
    <property type="term" value="C:cytosol"/>
    <property type="evidence" value="ECO:0007669"/>
    <property type="project" value="TreeGrafter"/>
</dbReference>
<dbReference type="GO" id="GO:0005525">
    <property type="term" value="F:GTP binding"/>
    <property type="evidence" value="ECO:0007669"/>
    <property type="project" value="UniProtKB-KW"/>
</dbReference>
<dbReference type="GO" id="GO:0003935">
    <property type="term" value="F:GTP cyclohydrolase II activity"/>
    <property type="evidence" value="ECO:0007669"/>
    <property type="project" value="UniProtKB-UniRule"/>
</dbReference>
<dbReference type="GO" id="GO:0008270">
    <property type="term" value="F:zinc ion binding"/>
    <property type="evidence" value="ECO:0007669"/>
    <property type="project" value="UniProtKB-UniRule"/>
</dbReference>
<dbReference type="GO" id="GO:0009231">
    <property type="term" value="P:riboflavin biosynthetic process"/>
    <property type="evidence" value="ECO:0007669"/>
    <property type="project" value="UniProtKB-UniRule"/>
</dbReference>
<dbReference type="CDD" id="cd00641">
    <property type="entry name" value="GTP_cyclohydro2"/>
    <property type="match status" value="1"/>
</dbReference>
<dbReference type="FunFam" id="3.40.50.10990:FF:000002">
    <property type="entry name" value="GTP cyclohydrolase-2"/>
    <property type="match status" value="1"/>
</dbReference>
<dbReference type="Gene3D" id="3.40.50.10990">
    <property type="entry name" value="GTP cyclohydrolase II"/>
    <property type="match status" value="1"/>
</dbReference>
<dbReference type="HAMAP" id="MF_00179">
    <property type="entry name" value="RibA"/>
    <property type="match status" value="1"/>
</dbReference>
<dbReference type="InterPro" id="IPR032677">
    <property type="entry name" value="GTP_cyclohydro_II"/>
</dbReference>
<dbReference type="InterPro" id="IPR000926">
    <property type="entry name" value="RibA"/>
</dbReference>
<dbReference type="InterPro" id="IPR036144">
    <property type="entry name" value="RibA-like_sf"/>
</dbReference>
<dbReference type="NCBIfam" id="NF001591">
    <property type="entry name" value="PRK00393.1"/>
    <property type="match status" value="1"/>
</dbReference>
<dbReference type="NCBIfam" id="TIGR00505">
    <property type="entry name" value="ribA"/>
    <property type="match status" value="1"/>
</dbReference>
<dbReference type="PANTHER" id="PTHR21327:SF18">
    <property type="entry name" value="3,4-DIHYDROXY-2-BUTANONE 4-PHOSPHATE SYNTHASE"/>
    <property type="match status" value="1"/>
</dbReference>
<dbReference type="PANTHER" id="PTHR21327">
    <property type="entry name" value="GTP CYCLOHYDROLASE II-RELATED"/>
    <property type="match status" value="1"/>
</dbReference>
<dbReference type="Pfam" id="PF00925">
    <property type="entry name" value="GTP_cyclohydro2"/>
    <property type="match status" value="1"/>
</dbReference>
<dbReference type="SUPFAM" id="SSF142695">
    <property type="entry name" value="RibA-like"/>
    <property type="match status" value="1"/>
</dbReference>
<reference key="1">
    <citation type="journal article" date="2008" name="Genomics">
        <title>Characterization of ST-4821 complex, a unique Neisseria meningitidis clone.</title>
        <authorList>
            <person name="Peng J."/>
            <person name="Yang L."/>
            <person name="Yang F."/>
            <person name="Yang J."/>
            <person name="Yan Y."/>
            <person name="Nie H."/>
            <person name="Zhang X."/>
            <person name="Xiong Z."/>
            <person name="Jiang Y."/>
            <person name="Cheng F."/>
            <person name="Xu X."/>
            <person name="Chen S."/>
            <person name="Sun L."/>
            <person name="Li W."/>
            <person name="Shen Y."/>
            <person name="Shao Z."/>
            <person name="Liang X."/>
            <person name="Xu J."/>
            <person name="Jin Q."/>
        </authorList>
    </citation>
    <scope>NUCLEOTIDE SEQUENCE [LARGE SCALE GENOMIC DNA]</scope>
    <source>
        <strain>053442</strain>
    </source>
</reference>